<dbReference type="EC" id="2.7.7.6" evidence="1"/>
<dbReference type="EMBL" id="CP001215">
    <property type="protein sequence ID" value="ACP16381.1"/>
    <property type="molecule type" value="Genomic_DNA"/>
</dbReference>
<dbReference type="RefSeq" id="WP_000147548.1">
    <property type="nucleotide sequence ID" value="NC_012581.1"/>
</dbReference>
<dbReference type="SMR" id="C3LJ74"/>
<dbReference type="GeneID" id="45020147"/>
<dbReference type="KEGG" id="bah:BAMEG_0118"/>
<dbReference type="HOGENOM" id="CLU_000524_4_1_9"/>
<dbReference type="GO" id="GO:0000428">
    <property type="term" value="C:DNA-directed RNA polymerase complex"/>
    <property type="evidence" value="ECO:0007669"/>
    <property type="project" value="UniProtKB-KW"/>
</dbReference>
<dbReference type="GO" id="GO:0003677">
    <property type="term" value="F:DNA binding"/>
    <property type="evidence" value="ECO:0007669"/>
    <property type="project" value="UniProtKB-UniRule"/>
</dbReference>
<dbReference type="GO" id="GO:0003899">
    <property type="term" value="F:DNA-directed RNA polymerase activity"/>
    <property type="evidence" value="ECO:0007669"/>
    <property type="project" value="UniProtKB-UniRule"/>
</dbReference>
<dbReference type="GO" id="GO:0032549">
    <property type="term" value="F:ribonucleoside binding"/>
    <property type="evidence" value="ECO:0007669"/>
    <property type="project" value="InterPro"/>
</dbReference>
<dbReference type="GO" id="GO:0006351">
    <property type="term" value="P:DNA-templated transcription"/>
    <property type="evidence" value="ECO:0007669"/>
    <property type="project" value="UniProtKB-UniRule"/>
</dbReference>
<dbReference type="CDD" id="cd00653">
    <property type="entry name" value="RNA_pol_B_RPB2"/>
    <property type="match status" value="1"/>
</dbReference>
<dbReference type="FunFam" id="3.90.1800.10:FF:000001">
    <property type="entry name" value="DNA-directed RNA polymerase subunit beta"/>
    <property type="match status" value="1"/>
</dbReference>
<dbReference type="Gene3D" id="2.40.50.100">
    <property type="match status" value="1"/>
</dbReference>
<dbReference type="Gene3D" id="2.40.50.150">
    <property type="match status" value="1"/>
</dbReference>
<dbReference type="Gene3D" id="3.90.1100.10">
    <property type="match status" value="2"/>
</dbReference>
<dbReference type="Gene3D" id="2.30.150.10">
    <property type="entry name" value="DNA-directed RNA polymerase, beta subunit, external 1 domain"/>
    <property type="match status" value="1"/>
</dbReference>
<dbReference type="Gene3D" id="2.40.270.10">
    <property type="entry name" value="DNA-directed RNA polymerase, subunit 2, domain 6"/>
    <property type="match status" value="1"/>
</dbReference>
<dbReference type="Gene3D" id="3.90.1800.10">
    <property type="entry name" value="RNA polymerase alpha subunit dimerisation domain"/>
    <property type="match status" value="1"/>
</dbReference>
<dbReference type="Gene3D" id="3.90.1110.10">
    <property type="entry name" value="RNA polymerase Rpb2, domain 2"/>
    <property type="match status" value="1"/>
</dbReference>
<dbReference type="HAMAP" id="MF_01321">
    <property type="entry name" value="RNApol_bact_RpoB"/>
    <property type="match status" value="1"/>
</dbReference>
<dbReference type="InterPro" id="IPR042107">
    <property type="entry name" value="DNA-dir_RNA_pol_bsu_ext_1_sf"/>
</dbReference>
<dbReference type="InterPro" id="IPR019462">
    <property type="entry name" value="DNA-dir_RNA_pol_bsu_external_1"/>
</dbReference>
<dbReference type="InterPro" id="IPR015712">
    <property type="entry name" value="DNA-dir_RNA_pol_su2"/>
</dbReference>
<dbReference type="InterPro" id="IPR007120">
    <property type="entry name" value="DNA-dir_RNAP_su2_dom"/>
</dbReference>
<dbReference type="InterPro" id="IPR037033">
    <property type="entry name" value="DNA-dir_RNAP_su2_hyb_sf"/>
</dbReference>
<dbReference type="InterPro" id="IPR010243">
    <property type="entry name" value="RNA_pol_bsu_bac"/>
</dbReference>
<dbReference type="InterPro" id="IPR007121">
    <property type="entry name" value="RNA_pol_bsu_CS"/>
</dbReference>
<dbReference type="InterPro" id="IPR007644">
    <property type="entry name" value="RNA_pol_bsu_protrusion"/>
</dbReference>
<dbReference type="InterPro" id="IPR007642">
    <property type="entry name" value="RNA_pol_Rpb2_2"/>
</dbReference>
<dbReference type="InterPro" id="IPR037034">
    <property type="entry name" value="RNA_pol_Rpb2_2_sf"/>
</dbReference>
<dbReference type="InterPro" id="IPR007645">
    <property type="entry name" value="RNA_pol_Rpb2_3"/>
</dbReference>
<dbReference type="InterPro" id="IPR007641">
    <property type="entry name" value="RNA_pol_Rpb2_7"/>
</dbReference>
<dbReference type="InterPro" id="IPR014724">
    <property type="entry name" value="RNA_pol_RPB2_OB-fold"/>
</dbReference>
<dbReference type="NCBIfam" id="NF001616">
    <property type="entry name" value="PRK00405.1"/>
    <property type="match status" value="1"/>
</dbReference>
<dbReference type="NCBIfam" id="TIGR02013">
    <property type="entry name" value="rpoB"/>
    <property type="match status" value="1"/>
</dbReference>
<dbReference type="PANTHER" id="PTHR20856">
    <property type="entry name" value="DNA-DIRECTED RNA POLYMERASE I SUBUNIT 2"/>
    <property type="match status" value="1"/>
</dbReference>
<dbReference type="Pfam" id="PF04563">
    <property type="entry name" value="RNA_pol_Rpb2_1"/>
    <property type="match status" value="1"/>
</dbReference>
<dbReference type="Pfam" id="PF04561">
    <property type="entry name" value="RNA_pol_Rpb2_2"/>
    <property type="match status" value="2"/>
</dbReference>
<dbReference type="Pfam" id="PF04565">
    <property type="entry name" value="RNA_pol_Rpb2_3"/>
    <property type="match status" value="1"/>
</dbReference>
<dbReference type="Pfam" id="PF10385">
    <property type="entry name" value="RNA_pol_Rpb2_45"/>
    <property type="match status" value="1"/>
</dbReference>
<dbReference type="Pfam" id="PF00562">
    <property type="entry name" value="RNA_pol_Rpb2_6"/>
    <property type="match status" value="1"/>
</dbReference>
<dbReference type="Pfam" id="PF04560">
    <property type="entry name" value="RNA_pol_Rpb2_7"/>
    <property type="match status" value="1"/>
</dbReference>
<dbReference type="SUPFAM" id="SSF64484">
    <property type="entry name" value="beta and beta-prime subunits of DNA dependent RNA-polymerase"/>
    <property type="match status" value="1"/>
</dbReference>
<dbReference type="PROSITE" id="PS01166">
    <property type="entry name" value="RNA_POL_BETA"/>
    <property type="match status" value="1"/>
</dbReference>
<protein>
    <recommendedName>
        <fullName evidence="1">DNA-directed RNA polymerase subunit beta</fullName>
        <shortName evidence="1">RNAP subunit beta</shortName>
        <ecNumber evidence="1">2.7.7.6</ecNumber>
    </recommendedName>
    <alternativeName>
        <fullName evidence="1">RNA polymerase subunit beta</fullName>
    </alternativeName>
    <alternativeName>
        <fullName evidence="1">Transcriptase subunit beta</fullName>
    </alternativeName>
</protein>
<evidence type="ECO:0000255" key="1">
    <source>
        <dbReference type="HAMAP-Rule" id="MF_01321"/>
    </source>
</evidence>
<evidence type="ECO:0000256" key="2">
    <source>
        <dbReference type="SAM" id="MobiDB-lite"/>
    </source>
</evidence>
<reference key="1">
    <citation type="submission" date="2008-10" db="EMBL/GenBank/DDBJ databases">
        <title>Genome sequence of Bacillus anthracis str. CDC 684.</title>
        <authorList>
            <person name="Dodson R.J."/>
            <person name="Munk A.C."/>
            <person name="Brettin T."/>
            <person name="Bruce D."/>
            <person name="Detter C."/>
            <person name="Tapia R."/>
            <person name="Han C."/>
            <person name="Sutton G."/>
            <person name="Sims D."/>
        </authorList>
    </citation>
    <scope>NUCLEOTIDE SEQUENCE [LARGE SCALE GENOMIC DNA]</scope>
    <source>
        <strain>CDC 684 / NRRL 3495</strain>
    </source>
</reference>
<feature type="chain" id="PRO_1000165787" description="DNA-directed RNA polymerase subunit beta">
    <location>
        <begin position="1"/>
        <end position="1177"/>
    </location>
</feature>
<feature type="region of interest" description="Disordered" evidence="2">
    <location>
        <begin position="1147"/>
        <end position="1177"/>
    </location>
</feature>
<feature type="compositionally biased region" description="Acidic residues" evidence="2">
    <location>
        <begin position="1147"/>
        <end position="1161"/>
    </location>
</feature>
<feature type="compositionally biased region" description="Basic and acidic residues" evidence="2">
    <location>
        <begin position="1162"/>
        <end position="1177"/>
    </location>
</feature>
<proteinExistence type="inferred from homology"/>
<keyword id="KW-0240">DNA-directed RNA polymerase</keyword>
<keyword id="KW-0548">Nucleotidyltransferase</keyword>
<keyword id="KW-0804">Transcription</keyword>
<keyword id="KW-0808">Transferase</keyword>
<sequence length="1177" mass="131891">MTGQLVQYGRHRQRRSYARISEVLELPNLIEIQTSSYQWFLDEGLREMFQDISPIEDFTGNLSLEFIDYSLGEPKYSVDECKERDVTYAAPLRVKVRLINKETGEVKEQDVFMGDFPLMTETGTFVINGAERVIVSQLVRSPSVYYSGKVDKNGKRGFTATVIPNRGAWLEYETDAKDVVYVRIDRTRKLPVTVLLRALGFGSDQEITELLGDNEYLSNTLEKDNTDSTEKALLEIYERLRPGEPPTVENAKSLLVSRFFDPKRYDLANVGRYKINKKLHIKNRLFNQRLAETLVDPETGEILAAEGTILDRRTLDRILPYLEKNIGFKTAKPMGGVVEGDVELQSIKIYAPESEGERVINVIGNANITRDVKHITPGDILASISYFFNLLYKVGDTDDIDHLGNRRLRSVGELLQNQFRIGLSRMERVVRERMSIQDTNAITPQALINIRPVIAAIKEFFGSSQLSQFMDQTNPLAELTHKRRLSALGPGGLTRERAGFEVRDVHYSHYGRMCPIETPEGPNIGLINSLSSFAKVNEFGFIETPYRRVDPETGLVTGHVDYLTADEEDNYVVAQANMKLSEEGEFLDEDIVARFRGENIVTNKERIDYMDVSPKQVVSAATACIPFLENDDSNRALMGANMQRQAVPLMNPESPIVGTGMEYVSAKDSGAAVICKHPGIVERVEAREVWVRRYVEVDGQTVKGDLDRYKMQKFIRSNQGTCYNQRPIVSVGNEVVKGEILADGPSMELGELALGRNVLVGFMTWDGYNYEDAIIMSERLVKDDVYTSIHIEEYESEARDTKLGPEEITRDIPNVGEDALRNLDERGIIRVGAEVKDGDLLVGKVTPKGVTELTAEERLLHAIFGEKAREVRDTSLRVPHGGGGIILDVKVFNREDGDELPPGVNQLVRAYIVQKRKISEGDKMAGRHGNKGVISRILPEEDMPYLPDGTPIDIMLNPLGVPSRMNIGQVLELHLGMAARYLGIHIATPVFDGAREEDVWGTIEEAGMANDAKTILYDGRTGEPFDNRVSVGVMYMIKLAHMVDDKLHARSTGPYSLVTQQPLGGKAQFGGQRFGEMEVWALEAYGAAYTLQEILTVKSDDVIGRVKTYEAIVKGENVPEPGVPESFKVLIKELQSLGMDVKMMSSDDTEIEMRDTEDDDDHQSADKLNVEVETTKE</sequence>
<accession>C3LJ74</accession>
<gene>
    <name evidence="1" type="primary">rpoB</name>
    <name type="ordered locus">BAMEG_0118</name>
</gene>
<name>RPOB_BACAC</name>
<organism>
    <name type="scientific">Bacillus anthracis (strain CDC 684 / NRRL 3495)</name>
    <dbReference type="NCBI Taxonomy" id="568206"/>
    <lineage>
        <taxon>Bacteria</taxon>
        <taxon>Bacillati</taxon>
        <taxon>Bacillota</taxon>
        <taxon>Bacilli</taxon>
        <taxon>Bacillales</taxon>
        <taxon>Bacillaceae</taxon>
        <taxon>Bacillus</taxon>
        <taxon>Bacillus cereus group</taxon>
    </lineage>
</organism>
<comment type="function">
    <text evidence="1">DNA-dependent RNA polymerase catalyzes the transcription of DNA into RNA using the four ribonucleoside triphosphates as substrates.</text>
</comment>
<comment type="catalytic activity">
    <reaction evidence="1">
        <text>RNA(n) + a ribonucleoside 5'-triphosphate = RNA(n+1) + diphosphate</text>
        <dbReference type="Rhea" id="RHEA:21248"/>
        <dbReference type="Rhea" id="RHEA-COMP:14527"/>
        <dbReference type="Rhea" id="RHEA-COMP:17342"/>
        <dbReference type="ChEBI" id="CHEBI:33019"/>
        <dbReference type="ChEBI" id="CHEBI:61557"/>
        <dbReference type="ChEBI" id="CHEBI:140395"/>
        <dbReference type="EC" id="2.7.7.6"/>
    </reaction>
</comment>
<comment type="subunit">
    <text evidence="1">The RNAP catalytic core consists of 2 alpha, 1 beta, 1 beta' and 1 omega subunit. When a sigma factor is associated with the core the holoenzyme is formed, which can initiate transcription.</text>
</comment>
<comment type="similarity">
    <text evidence="1">Belongs to the RNA polymerase beta chain family.</text>
</comment>